<geneLocation type="plasmid">
    <name>FB24-3</name>
</geneLocation>
<accession>A0AWV9</accession>
<protein>
    <recommendedName>
        <fullName evidence="1">UPF0060 membrane protein Arth_4238</fullName>
    </recommendedName>
</protein>
<comment type="subcellular location">
    <subcellularLocation>
        <location evidence="1">Cell membrane</location>
        <topology evidence="1">Multi-pass membrane protein</topology>
    </subcellularLocation>
</comment>
<comment type="similarity">
    <text evidence="1">Belongs to the UPF0060 family.</text>
</comment>
<name>Y4238_ARTS2</name>
<gene>
    <name type="ordered locus">Arth_4238</name>
</gene>
<evidence type="ECO:0000255" key="1">
    <source>
        <dbReference type="HAMAP-Rule" id="MF_00010"/>
    </source>
</evidence>
<proteinExistence type="inferred from homology"/>
<feature type="chain" id="PRO_5000148045" description="UPF0060 membrane protein Arth_4238">
    <location>
        <begin position="1"/>
        <end position="112"/>
    </location>
</feature>
<feature type="transmembrane region" description="Helical" evidence="1">
    <location>
        <begin position="7"/>
        <end position="27"/>
    </location>
</feature>
<feature type="transmembrane region" description="Helical" evidence="1">
    <location>
        <begin position="33"/>
        <end position="53"/>
    </location>
</feature>
<feature type="transmembrane region" description="Helical" evidence="1">
    <location>
        <begin position="62"/>
        <end position="82"/>
    </location>
</feature>
<feature type="transmembrane region" description="Helical" evidence="1">
    <location>
        <begin position="88"/>
        <end position="108"/>
    </location>
</feature>
<organism>
    <name type="scientific">Arthrobacter sp. (strain FB24)</name>
    <dbReference type="NCBI Taxonomy" id="290399"/>
    <lineage>
        <taxon>Bacteria</taxon>
        <taxon>Bacillati</taxon>
        <taxon>Actinomycetota</taxon>
        <taxon>Actinomycetes</taxon>
        <taxon>Micrococcales</taxon>
        <taxon>Micrococcaceae</taxon>
        <taxon>Arthrobacter</taxon>
    </lineage>
</organism>
<sequence>MTIAKTILLFVLAAAAEIGGAWLVWQAVREGKEWWWAGLGVLALGVYGFAATLQPDAHFGRILAAYGGVFVAGSLAWGMVFDGFRPDRWDIIGSVICLLGVAVIMFAPRNAG</sequence>
<reference key="1">
    <citation type="journal article" date="2013" name="Stand. Genomic Sci.">
        <title>Complete genome sequence of Arthrobacter sp. strain FB24.</title>
        <authorList>
            <person name="Nakatsu C.H."/>
            <person name="Barabote R."/>
            <person name="Thompson S."/>
            <person name="Bruce D."/>
            <person name="Detter C."/>
            <person name="Brettin T."/>
            <person name="Han C."/>
            <person name="Beasley F."/>
            <person name="Chen W."/>
            <person name="Konopka A."/>
            <person name="Xie G."/>
        </authorList>
    </citation>
    <scope>NUCLEOTIDE SEQUENCE [LARGE SCALE GENOMIC DNA]</scope>
    <source>
        <strain>FB24</strain>
    </source>
</reference>
<dbReference type="EMBL" id="CP000457">
    <property type="protein sequence ID" value="ABK05879.1"/>
    <property type="molecule type" value="Genomic_DNA"/>
</dbReference>
<dbReference type="RefSeq" id="WP_011689841.1">
    <property type="nucleotide sequence ID" value="NC_008539.1"/>
</dbReference>
<dbReference type="SMR" id="A0AWV9"/>
<dbReference type="KEGG" id="art:Arth_4238"/>
<dbReference type="HOGENOM" id="CLU_117653_0_1_11"/>
<dbReference type="OrthoDB" id="123240at2"/>
<dbReference type="Proteomes" id="UP000000754">
    <property type="component" value="Plasmid FB24-3"/>
</dbReference>
<dbReference type="GO" id="GO:0005886">
    <property type="term" value="C:plasma membrane"/>
    <property type="evidence" value="ECO:0007669"/>
    <property type="project" value="UniProtKB-SubCell"/>
</dbReference>
<dbReference type="HAMAP" id="MF_00010">
    <property type="entry name" value="UPF0060"/>
    <property type="match status" value="1"/>
</dbReference>
<dbReference type="InterPro" id="IPR003844">
    <property type="entry name" value="UPF0060"/>
</dbReference>
<dbReference type="NCBIfam" id="NF002586">
    <property type="entry name" value="PRK02237.1"/>
    <property type="match status" value="1"/>
</dbReference>
<dbReference type="PANTHER" id="PTHR36116">
    <property type="entry name" value="UPF0060 MEMBRANE PROTEIN YNFA"/>
    <property type="match status" value="1"/>
</dbReference>
<dbReference type="PANTHER" id="PTHR36116:SF1">
    <property type="entry name" value="UPF0060 MEMBRANE PROTEIN YNFA"/>
    <property type="match status" value="1"/>
</dbReference>
<dbReference type="Pfam" id="PF02694">
    <property type="entry name" value="UPF0060"/>
    <property type="match status" value="1"/>
</dbReference>
<dbReference type="SUPFAM" id="SSF103481">
    <property type="entry name" value="Multidrug resistance efflux transporter EmrE"/>
    <property type="match status" value="1"/>
</dbReference>
<keyword id="KW-1003">Cell membrane</keyword>
<keyword id="KW-0472">Membrane</keyword>
<keyword id="KW-0614">Plasmid</keyword>
<keyword id="KW-1185">Reference proteome</keyword>
<keyword id="KW-0812">Transmembrane</keyword>
<keyword id="KW-1133">Transmembrane helix</keyword>